<sequence length="60" mass="6570">MAAKKVVKATPKRSELYTVDAQGKATTSHRACPRCGAGVFMGEHKDRFSCGKCGYTEFKQ</sequence>
<accession>A2SR71</accession>
<name>RS27A_METLZ</name>
<comment type="cofactor">
    <cofactor evidence="1">
        <name>Zn(2+)</name>
        <dbReference type="ChEBI" id="CHEBI:29105"/>
    </cofactor>
    <text evidence="1">Binds 1 zinc ion per subunit.</text>
</comment>
<comment type="subunit">
    <text evidence="1">Part of the 30S ribosomal subunit.</text>
</comment>
<comment type="similarity">
    <text evidence="1">Belongs to the eukaryotic ribosomal protein eS31 family.</text>
</comment>
<dbReference type="EMBL" id="CP000559">
    <property type="protein sequence ID" value="ABN06827.1"/>
    <property type="molecule type" value="Genomic_DNA"/>
</dbReference>
<dbReference type="RefSeq" id="WP_011833028.1">
    <property type="nucleotide sequence ID" value="NC_008942.1"/>
</dbReference>
<dbReference type="SMR" id="A2SR71"/>
<dbReference type="STRING" id="410358.Mlab_0654"/>
<dbReference type="GeneID" id="4795876"/>
<dbReference type="KEGG" id="mla:Mlab_0654"/>
<dbReference type="eggNOG" id="arCOG04183">
    <property type="taxonomic scope" value="Archaea"/>
</dbReference>
<dbReference type="HOGENOM" id="CLU_179743_2_0_2"/>
<dbReference type="OrthoDB" id="25142at2157"/>
<dbReference type="Proteomes" id="UP000000365">
    <property type="component" value="Chromosome"/>
</dbReference>
<dbReference type="GO" id="GO:1990904">
    <property type="term" value="C:ribonucleoprotein complex"/>
    <property type="evidence" value="ECO:0007669"/>
    <property type="project" value="UniProtKB-KW"/>
</dbReference>
<dbReference type="GO" id="GO:0005840">
    <property type="term" value="C:ribosome"/>
    <property type="evidence" value="ECO:0007669"/>
    <property type="project" value="UniProtKB-KW"/>
</dbReference>
<dbReference type="GO" id="GO:0003735">
    <property type="term" value="F:structural constituent of ribosome"/>
    <property type="evidence" value="ECO:0007669"/>
    <property type="project" value="InterPro"/>
</dbReference>
<dbReference type="GO" id="GO:0008270">
    <property type="term" value="F:zinc ion binding"/>
    <property type="evidence" value="ECO:0007669"/>
    <property type="project" value="UniProtKB-UniRule"/>
</dbReference>
<dbReference type="GO" id="GO:0006412">
    <property type="term" value="P:translation"/>
    <property type="evidence" value="ECO:0007669"/>
    <property type="project" value="UniProtKB-UniRule"/>
</dbReference>
<dbReference type="Gene3D" id="6.20.50.180">
    <property type="match status" value="1"/>
</dbReference>
<dbReference type="HAMAP" id="MF_00777">
    <property type="entry name" value="Ribosomal_eS31"/>
    <property type="match status" value="1"/>
</dbReference>
<dbReference type="InterPro" id="IPR002906">
    <property type="entry name" value="Ribosomal_eS31"/>
</dbReference>
<dbReference type="InterPro" id="IPR022845">
    <property type="entry name" value="Ribosomal_eS31_arc"/>
</dbReference>
<dbReference type="InterPro" id="IPR011332">
    <property type="entry name" value="Ribosomal_zn-bd"/>
</dbReference>
<dbReference type="NCBIfam" id="NF001669">
    <property type="entry name" value="PRK00432.1"/>
    <property type="match status" value="1"/>
</dbReference>
<dbReference type="Pfam" id="PF01599">
    <property type="entry name" value="Ribosomal_S27"/>
    <property type="match status" value="1"/>
</dbReference>
<dbReference type="SMART" id="SM01402">
    <property type="entry name" value="Ribosomal_S27"/>
    <property type="match status" value="1"/>
</dbReference>
<dbReference type="SUPFAM" id="SSF57829">
    <property type="entry name" value="Zn-binding ribosomal proteins"/>
    <property type="match status" value="1"/>
</dbReference>
<feature type="chain" id="PRO_1000194303" description="Small ribosomal subunit protein eS31">
    <location>
        <begin position="1"/>
        <end position="60"/>
    </location>
</feature>
<feature type="zinc finger region" description="C4-type" evidence="1">
    <location>
        <begin position="32"/>
        <end position="53"/>
    </location>
</feature>
<feature type="binding site" evidence="1">
    <location>
        <position position="32"/>
    </location>
    <ligand>
        <name>Zn(2+)</name>
        <dbReference type="ChEBI" id="CHEBI:29105"/>
    </ligand>
</feature>
<feature type="binding site" evidence="1">
    <location>
        <position position="35"/>
    </location>
    <ligand>
        <name>Zn(2+)</name>
        <dbReference type="ChEBI" id="CHEBI:29105"/>
    </ligand>
</feature>
<feature type="binding site" evidence="1">
    <location>
        <position position="50"/>
    </location>
    <ligand>
        <name>Zn(2+)</name>
        <dbReference type="ChEBI" id="CHEBI:29105"/>
    </ligand>
</feature>
<feature type="binding site" evidence="1">
    <location>
        <position position="53"/>
    </location>
    <ligand>
        <name>Zn(2+)</name>
        <dbReference type="ChEBI" id="CHEBI:29105"/>
    </ligand>
</feature>
<proteinExistence type="inferred from homology"/>
<organism>
    <name type="scientific">Methanocorpusculum labreanum (strain ATCC 43576 / DSM 4855 / Z)</name>
    <dbReference type="NCBI Taxonomy" id="410358"/>
    <lineage>
        <taxon>Archaea</taxon>
        <taxon>Methanobacteriati</taxon>
        <taxon>Methanobacteriota</taxon>
        <taxon>Stenosarchaea group</taxon>
        <taxon>Methanomicrobia</taxon>
        <taxon>Methanomicrobiales</taxon>
        <taxon>Methanocorpusculaceae</taxon>
        <taxon>Methanocorpusculum</taxon>
    </lineage>
</organism>
<evidence type="ECO:0000255" key="1">
    <source>
        <dbReference type="HAMAP-Rule" id="MF_00777"/>
    </source>
</evidence>
<evidence type="ECO:0000305" key="2"/>
<protein>
    <recommendedName>
        <fullName evidence="1">Small ribosomal subunit protein eS31</fullName>
    </recommendedName>
    <alternativeName>
        <fullName evidence="2">30S ribosomal protein S27ae</fullName>
    </alternativeName>
</protein>
<keyword id="KW-0479">Metal-binding</keyword>
<keyword id="KW-1185">Reference proteome</keyword>
<keyword id="KW-0687">Ribonucleoprotein</keyword>
<keyword id="KW-0689">Ribosomal protein</keyword>
<keyword id="KW-0862">Zinc</keyword>
<keyword id="KW-0863">Zinc-finger</keyword>
<reference key="1">
    <citation type="journal article" date="2009" name="Stand. Genomic Sci.">
        <title>Complete genome sequence of Methanocorpusculum labreanum type strain Z.</title>
        <authorList>
            <person name="Anderson I.J."/>
            <person name="Sieprawska-Lupa M."/>
            <person name="Goltsman E."/>
            <person name="Lapidus A."/>
            <person name="Copeland A."/>
            <person name="Glavina Del Rio T."/>
            <person name="Tice H."/>
            <person name="Dalin E."/>
            <person name="Barry K."/>
            <person name="Pitluck S."/>
            <person name="Hauser L."/>
            <person name="Land M."/>
            <person name="Lucas S."/>
            <person name="Richardson P."/>
            <person name="Whitman W.B."/>
            <person name="Kyrpides N.C."/>
        </authorList>
    </citation>
    <scope>NUCLEOTIDE SEQUENCE [LARGE SCALE GENOMIC DNA]</scope>
    <source>
        <strain>ATCC 43576 / DSM 4855 / Z</strain>
    </source>
</reference>
<gene>
    <name evidence="1" type="primary">rps27ae</name>
    <name type="ordered locus">Mlab_0654</name>
</gene>